<keyword id="KW-0067">ATP-binding</keyword>
<keyword id="KW-0456">Lyase</keyword>
<keyword id="KW-0520">NAD</keyword>
<keyword id="KW-0521">NADP</keyword>
<keyword id="KW-0547">Nucleotide-binding</keyword>
<keyword id="KW-1185">Reference proteome</keyword>
<evidence type="ECO:0000255" key="1">
    <source>
        <dbReference type="HAMAP-Rule" id="MF_01965"/>
    </source>
</evidence>
<name>NNRD_STRR6</name>
<sequence length="290" mass="31440">MKVINQTLLEKVIIERSRSSHKGDYGRLLLLGGTYPYGGAIIMAALAAVKNGAGLVTVGTDRENIPALHSHLPEAMAFALQDKQLLKEQLEKAEVVLLGPGLGDNAFGEDLVKQVFAGLKQNQILIVDGGALTILARTSLSFPSSQLILTPHQKEWEKLSGITIEKQKEDTTASALTSFPKGTILVEKGPATRVWQAGQSDYYQLQVGGPYQATGGMGDTLAGMIAGFVGQFRQASLYERVAVATHLHSAIAQELSQENYVVLPTEISRYLPKIMKIICQQERVSKDKLV</sequence>
<gene>
    <name evidence="1" type="primary">nnrD</name>
    <name type="ordered locus">spr0730</name>
</gene>
<comment type="function">
    <text evidence="1">Catalyzes the dehydration of the S-form of NAD(P)HX at the expense of ADP, which is converted to AMP. Together with NAD(P)HX epimerase, which catalyzes the epimerization of the S- and R-forms, the enzyme allows the repair of both epimers of NAD(P)HX, a damaged form of NAD(P)H that is a result of enzymatic or heat-dependent hydration.</text>
</comment>
<comment type="catalytic activity">
    <reaction evidence="1">
        <text>(6S)-NADHX + ADP = AMP + phosphate + NADH + H(+)</text>
        <dbReference type="Rhea" id="RHEA:32223"/>
        <dbReference type="ChEBI" id="CHEBI:15378"/>
        <dbReference type="ChEBI" id="CHEBI:43474"/>
        <dbReference type="ChEBI" id="CHEBI:57945"/>
        <dbReference type="ChEBI" id="CHEBI:64074"/>
        <dbReference type="ChEBI" id="CHEBI:456215"/>
        <dbReference type="ChEBI" id="CHEBI:456216"/>
        <dbReference type="EC" id="4.2.1.136"/>
    </reaction>
</comment>
<comment type="catalytic activity">
    <reaction evidence="1">
        <text>(6S)-NADPHX + ADP = AMP + phosphate + NADPH + H(+)</text>
        <dbReference type="Rhea" id="RHEA:32235"/>
        <dbReference type="ChEBI" id="CHEBI:15378"/>
        <dbReference type="ChEBI" id="CHEBI:43474"/>
        <dbReference type="ChEBI" id="CHEBI:57783"/>
        <dbReference type="ChEBI" id="CHEBI:64076"/>
        <dbReference type="ChEBI" id="CHEBI:456215"/>
        <dbReference type="ChEBI" id="CHEBI:456216"/>
        <dbReference type="EC" id="4.2.1.136"/>
    </reaction>
</comment>
<comment type="cofactor">
    <cofactor evidence="1">
        <name>Mg(2+)</name>
        <dbReference type="ChEBI" id="CHEBI:18420"/>
    </cofactor>
</comment>
<comment type="subunit">
    <text evidence="1">Homotetramer.</text>
</comment>
<comment type="similarity">
    <text evidence="1">Belongs to the NnrD/CARKD family.</text>
</comment>
<dbReference type="EC" id="4.2.1.136" evidence="1"/>
<dbReference type="EMBL" id="AE007317">
    <property type="protein sequence ID" value="AAK99534.1"/>
    <property type="molecule type" value="Genomic_DNA"/>
</dbReference>
<dbReference type="PIR" id="B97963">
    <property type="entry name" value="B97963"/>
</dbReference>
<dbReference type="RefSeq" id="NP_358324.1">
    <property type="nucleotide sequence ID" value="NC_003098.1"/>
</dbReference>
<dbReference type="RefSeq" id="WP_000864675.1">
    <property type="nucleotide sequence ID" value="NC_003098.1"/>
</dbReference>
<dbReference type="SMR" id="Q8DQD2"/>
<dbReference type="STRING" id="171101.spr0730"/>
<dbReference type="KEGG" id="spr:spr0730"/>
<dbReference type="PATRIC" id="fig|171101.6.peg.808"/>
<dbReference type="eggNOG" id="COG0063">
    <property type="taxonomic scope" value="Bacteria"/>
</dbReference>
<dbReference type="HOGENOM" id="CLU_024853_2_1_9"/>
<dbReference type="Proteomes" id="UP000000586">
    <property type="component" value="Chromosome"/>
</dbReference>
<dbReference type="GO" id="GO:0052855">
    <property type="term" value="F:ADP-dependent NAD(P)H-hydrate dehydratase activity"/>
    <property type="evidence" value="ECO:0000318"/>
    <property type="project" value="GO_Central"/>
</dbReference>
<dbReference type="GO" id="GO:0005524">
    <property type="term" value="F:ATP binding"/>
    <property type="evidence" value="ECO:0007669"/>
    <property type="project" value="UniProtKB-KW"/>
</dbReference>
<dbReference type="GO" id="GO:0052856">
    <property type="term" value="F:NAD(P)HX epimerase activity"/>
    <property type="evidence" value="ECO:0000318"/>
    <property type="project" value="GO_Central"/>
</dbReference>
<dbReference type="GO" id="GO:0110051">
    <property type="term" value="P:metabolite repair"/>
    <property type="evidence" value="ECO:0000318"/>
    <property type="project" value="GO_Central"/>
</dbReference>
<dbReference type="GO" id="GO:0046496">
    <property type="term" value="P:nicotinamide nucleotide metabolic process"/>
    <property type="evidence" value="ECO:0007669"/>
    <property type="project" value="UniProtKB-UniRule"/>
</dbReference>
<dbReference type="CDD" id="cd01171">
    <property type="entry name" value="YXKO-related"/>
    <property type="match status" value="1"/>
</dbReference>
<dbReference type="Gene3D" id="3.40.1190.20">
    <property type="match status" value="1"/>
</dbReference>
<dbReference type="HAMAP" id="MF_01965">
    <property type="entry name" value="NADHX_dehydratase"/>
    <property type="match status" value="1"/>
</dbReference>
<dbReference type="InterPro" id="IPR017953">
    <property type="entry name" value="Carbohydrate_kinase_pred_CS"/>
</dbReference>
<dbReference type="InterPro" id="IPR000631">
    <property type="entry name" value="CARKD"/>
</dbReference>
<dbReference type="InterPro" id="IPR029056">
    <property type="entry name" value="Ribokinase-like"/>
</dbReference>
<dbReference type="NCBIfam" id="TIGR00196">
    <property type="entry name" value="yjeF_cterm"/>
    <property type="match status" value="1"/>
</dbReference>
<dbReference type="PANTHER" id="PTHR12592:SF0">
    <property type="entry name" value="ATP-DEPENDENT (S)-NAD(P)H-HYDRATE DEHYDRATASE"/>
    <property type="match status" value="1"/>
</dbReference>
<dbReference type="PANTHER" id="PTHR12592">
    <property type="entry name" value="ATP-DEPENDENT (S)-NAD(P)H-HYDRATE DEHYDRATASE FAMILY MEMBER"/>
    <property type="match status" value="1"/>
</dbReference>
<dbReference type="Pfam" id="PF01256">
    <property type="entry name" value="Carb_kinase"/>
    <property type="match status" value="1"/>
</dbReference>
<dbReference type="SUPFAM" id="SSF53613">
    <property type="entry name" value="Ribokinase-like"/>
    <property type="match status" value="1"/>
</dbReference>
<dbReference type="PROSITE" id="PS01049">
    <property type="entry name" value="YJEF_C_1"/>
    <property type="match status" value="1"/>
</dbReference>
<dbReference type="PROSITE" id="PS01050">
    <property type="entry name" value="YJEF_C_2"/>
    <property type="match status" value="1"/>
</dbReference>
<dbReference type="PROSITE" id="PS51383">
    <property type="entry name" value="YJEF_C_3"/>
    <property type="match status" value="1"/>
</dbReference>
<accession>Q8DQD2</accession>
<proteinExistence type="inferred from homology"/>
<feature type="chain" id="PRO_0000416150" description="ADP-dependent (S)-NAD(P)H-hydrate dehydratase">
    <location>
        <begin position="1"/>
        <end position="290"/>
    </location>
</feature>
<feature type="domain" description="YjeF C-terminal" evidence="1">
    <location>
        <begin position="5"/>
        <end position="278"/>
    </location>
</feature>
<feature type="binding site" evidence="1">
    <location>
        <position position="40"/>
    </location>
    <ligand>
        <name>(6S)-NADPHX</name>
        <dbReference type="ChEBI" id="CHEBI:64076"/>
    </ligand>
</feature>
<feature type="binding site" evidence="1">
    <location>
        <position position="103"/>
    </location>
    <ligand>
        <name>(6S)-NADPHX</name>
        <dbReference type="ChEBI" id="CHEBI:64076"/>
    </ligand>
</feature>
<feature type="binding site" evidence="1">
    <location>
        <position position="152"/>
    </location>
    <ligand>
        <name>(6S)-NADPHX</name>
        <dbReference type="ChEBI" id="CHEBI:64076"/>
    </ligand>
</feature>
<feature type="binding site" evidence="1">
    <location>
        <position position="218"/>
    </location>
    <ligand>
        <name>AMP</name>
        <dbReference type="ChEBI" id="CHEBI:456215"/>
    </ligand>
</feature>
<feature type="binding site" evidence="1">
    <location>
        <position position="219"/>
    </location>
    <ligand>
        <name>(6S)-NADPHX</name>
        <dbReference type="ChEBI" id="CHEBI:64076"/>
    </ligand>
</feature>
<reference key="1">
    <citation type="journal article" date="2001" name="J. Bacteriol.">
        <title>Genome of the bacterium Streptococcus pneumoniae strain R6.</title>
        <authorList>
            <person name="Hoskins J."/>
            <person name="Alborn W.E. Jr."/>
            <person name="Arnold J."/>
            <person name="Blaszczak L.C."/>
            <person name="Burgett S."/>
            <person name="DeHoff B.S."/>
            <person name="Estrem S.T."/>
            <person name="Fritz L."/>
            <person name="Fu D.-J."/>
            <person name="Fuller W."/>
            <person name="Geringer C."/>
            <person name="Gilmour R."/>
            <person name="Glass J.S."/>
            <person name="Khoja H."/>
            <person name="Kraft A.R."/>
            <person name="Lagace R.E."/>
            <person name="LeBlanc D.J."/>
            <person name="Lee L.N."/>
            <person name="Lefkowitz E.J."/>
            <person name="Lu J."/>
            <person name="Matsushima P."/>
            <person name="McAhren S.M."/>
            <person name="McHenney M."/>
            <person name="McLeaster K."/>
            <person name="Mundy C.W."/>
            <person name="Nicas T.I."/>
            <person name="Norris F.H."/>
            <person name="O'Gara M."/>
            <person name="Peery R.B."/>
            <person name="Robertson G.T."/>
            <person name="Rockey P."/>
            <person name="Sun P.-M."/>
            <person name="Winkler M.E."/>
            <person name="Yang Y."/>
            <person name="Young-Bellido M."/>
            <person name="Zhao G."/>
            <person name="Zook C.A."/>
            <person name="Baltz R.H."/>
            <person name="Jaskunas S.R."/>
            <person name="Rosteck P.R. Jr."/>
            <person name="Skatrud P.L."/>
            <person name="Glass J.I."/>
        </authorList>
    </citation>
    <scope>NUCLEOTIDE SEQUENCE [LARGE SCALE GENOMIC DNA]</scope>
    <source>
        <strain>ATCC BAA-255 / R6</strain>
    </source>
</reference>
<protein>
    <recommendedName>
        <fullName evidence="1">ADP-dependent (S)-NAD(P)H-hydrate dehydratase</fullName>
        <ecNumber evidence="1">4.2.1.136</ecNumber>
    </recommendedName>
    <alternativeName>
        <fullName evidence="1">ADP-dependent NAD(P)HX dehydratase</fullName>
    </alternativeName>
</protein>
<organism>
    <name type="scientific">Streptococcus pneumoniae (strain ATCC BAA-255 / R6)</name>
    <dbReference type="NCBI Taxonomy" id="171101"/>
    <lineage>
        <taxon>Bacteria</taxon>
        <taxon>Bacillati</taxon>
        <taxon>Bacillota</taxon>
        <taxon>Bacilli</taxon>
        <taxon>Lactobacillales</taxon>
        <taxon>Streptococcaceae</taxon>
        <taxon>Streptococcus</taxon>
    </lineage>
</organism>